<sequence>MVQMRSKNMAYESGTNNYSDTIANGNTLPPRSKKGHSGRRKRSETLPIACNNFCVTRQIDDDEQAFKMLDKVSHLKKFSAEDGDDNNIFVQWADDITDILFGLCCTGTFLKLLISSALSGRAKTWFDSTTEGIDDHVIKAYSFEKFLALLSEEFDGARSLRREIFTELLTLSIDSEKSLEAFAHKSGRLTPYYLSSGAALDLFLTKLEPQLQKQLENCAFPMTLNLALLITACEFAKRASNHKKYRYKNTRDSDICTPKSKNTAIVSKLSNTKTISKNKVIEKSDKKNYFDKNSQHIPDPKRRKQNEPGMRLFLVMDEEKNILTSRNVSANAYTSKNGHTNLSDLHTNLKNSKSQQCAVEPISILNSGSLVTGTINIDLINDEVLGTKEETTTYDERMDGNSRSLNERCCAVKKNSLQPITSNIFQKNAEIQGTKIGSVLDSGISNSFSSTEYMFPPTSSATVSNPVKKNEISKSSQVKDIAQFNPFMTNEKEKKLNPSESFKSPGVSMEINRLSRIAGLRNIPGNIYEDSKMLNLKTRKCYPLHNFAVRTRSAHFNDRPSNYISPHETINATLRSPASFDSIQCITRSKRVDAETNKATGSAKSENIETKSRKFPEVINPFLVNTTNKKESD</sequence>
<protein>
    <recommendedName>
        <fullName>Uncharacterized protein YIL092W</fullName>
    </recommendedName>
</protein>
<organism>
    <name type="scientific">Saccharomyces cerevisiae (strain ATCC 204508 / S288c)</name>
    <name type="common">Baker's yeast</name>
    <dbReference type="NCBI Taxonomy" id="559292"/>
    <lineage>
        <taxon>Eukaryota</taxon>
        <taxon>Fungi</taxon>
        <taxon>Dikarya</taxon>
        <taxon>Ascomycota</taxon>
        <taxon>Saccharomycotina</taxon>
        <taxon>Saccharomycetes</taxon>
        <taxon>Saccharomycetales</taxon>
        <taxon>Saccharomycetaceae</taxon>
        <taxon>Saccharomyces</taxon>
    </lineage>
</organism>
<evidence type="ECO:0000255" key="1"/>
<evidence type="ECO:0000256" key="2">
    <source>
        <dbReference type="SAM" id="MobiDB-lite"/>
    </source>
</evidence>
<evidence type="ECO:0000269" key="3">
    <source>
    </source>
</evidence>
<evidence type="ECO:0000305" key="4"/>
<accession>P40497</accession>
<accession>D6VVJ5</accession>
<comment type="subcellular location">
    <subcellularLocation>
        <location evidence="4">Membrane</location>
        <topology evidence="4">Multi-pass membrane protein</topology>
    </subcellularLocation>
</comment>
<comment type="miscellaneous">
    <text evidence="3">Present with 105 molecules/cell in log phase SD medium.</text>
</comment>
<keyword id="KW-0472">Membrane</keyword>
<keyword id="KW-1185">Reference proteome</keyword>
<keyword id="KW-0812">Transmembrane</keyword>
<keyword id="KW-1133">Transmembrane helix</keyword>
<proteinExistence type="evidence at protein level"/>
<dbReference type="EMBL" id="Z46728">
    <property type="protein sequence ID" value="CAA86702.1"/>
    <property type="molecule type" value="Genomic_DNA"/>
</dbReference>
<dbReference type="EMBL" id="BK006942">
    <property type="protein sequence ID" value="DAA08461.1"/>
    <property type="molecule type" value="Genomic_DNA"/>
</dbReference>
<dbReference type="PIR" id="S49788">
    <property type="entry name" value="S49788"/>
</dbReference>
<dbReference type="RefSeq" id="NP_012174.3">
    <property type="nucleotide sequence ID" value="NM_001179440.3"/>
</dbReference>
<dbReference type="BioGRID" id="34900">
    <property type="interactions" value="63"/>
</dbReference>
<dbReference type="DIP" id="DIP-5650N"/>
<dbReference type="FunCoup" id="P40497">
    <property type="interactions" value="25"/>
</dbReference>
<dbReference type="IntAct" id="P40497">
    <property type="interactions" value="4"/>
</dbReference>
<dbReference type="MINT" id="P40497"/>
<dbReference type="STRING" id="4932.YIL092W"/>
<dbReference type="iPTMnet" id="P40497"/>
<dbReference type="PaxDb" id="4932-YIL092W"/>
<dbReference type="PeptideAtlas" id="P40497"/>
<dbReference type="EnsemblFungi" id="YIL092W_mRNA">
    <property type="protein sequence ID" value="YIL092W"/>
    <property type="gene ID" value="YIL092W"/>
</dbReference>
<dbReference type="GeneID" id="854716"/>
<dbReference type="KEGG" id="sce:YIL092W"/>
<dbReference type="AGR" id="SGD:S000001354"/>
<dbReference type="SGD" id="S000001354">
    <property type="gene designation" value="YIL092W"/>
</dbReference>
<dbReference type="VEuPathDB" id="FungiDB:YIL092W"/>
<dbReference type="HOGENOM" id="CLU_432242_0_0_1"/>
<dbReference type="InParanoid" id="P40497"/>
<dbReference type="OMA" id="LENCAFP"/>
<dbReference type="OrthoDB" id="4060607at2759"/>
<dbReference type="BioCyc" id="YEAST:G3O-31352-MONOMER"/>
<dbReference type="BioGRID-ORCS" id="854716">
    <property type="hits" value="0 hits in 10 CRISPR screens"/>
</dbReference>
<dbReference type="PRO" id="PR:P40497"/>
<dbReference type="Proteomes" id="UP000002311">
    <property type="component" value="Chromosome IX"/>
</dbReference>
<dbReference type="RNAct" id="P40497">
    <property type="molecule type" value="protein"/>
</dbReference>
<dbReference type="GO" id="GO:0005737">
    <property type="term" value="C:cytoplasm"/>
    <property type="evidence" value="ECO:0007005"/>
    <property type="project" value="SGD"/>
</dbReference>
<dbReference type="GO" id="GO:0016020">
    <property type="term" value="C:membrane"/>
    <property type="evidence" value="ECO:0007669"/>
    <property type="project" value="UniProtKB-SubCell"/>
</dbReference>
<dbReference type="GO" id="GO:0005634">
    <property type="term" value="C:nucleus"/>
    <property type="evidence" value="ECO:0007005"/>
    <property type="project" value="SGD"/>
</dbReference>
<name>YIJ2_YEAST</name>
<gene>
    <name type="ordered locus">YIL092W</name>
</gene>
<reference key="1">
    <citation type="journal article" date="1997" name="Nature">
        <title>The nucleotide sequence of Saccharomyces cerevisiae chromosome IX.</title>
        <authorList>
            <person name="Churcher C.M."/>
            <person name="Bowman S."/>
            <person name="Badcock K."/>
            <person name="Bankier A.T."/>
            <person name="Brown D."/>
            <person name="Chillingworth T."/>
            <person name="Connor R."/>
            <person name="Devlin K."/>
            <person name="Gentles S."/>
            <person name="Hamlin N."/>
            <person name="Harris D.E."/>
            <person name="Horsnell T."/>
            <person name="Hunt S."/>
            <person name="Jagels K."/>
            <person name="Jones M."/>
            <person name="Lye G."/>
            <person name="Moule S."/>
            <person name="Odell C."/>
            <person name="Pearson D."/>
            <person name="Rajandream M.A."/>
            <person name="Rice P."/>
            <person name="Rowley N."/>
            <person name="Skelton J."/>
            <person name="Smith V."/>
            <person name="Walsh S.V."/>
            <person name="Whitehead S."/>
            <person name="Barrell B.G."/>
        </authorList>
    </citation>
    <scope>NUCLEOTIDE SEQUENCE [LARGE SCALE GENOMIC DNA]</scope>
    <source>
        <strain>ATCC 204508 / S288c</strain>
    </source>
</reference>
<reference key="2">
    <citation type="journal article" date="2014" name="G3 (Bethesda)">
        <title>The reference genome sequence of Saccharomyces cerevisiae: Then and now.</title>
        <authorList>
            <person name="Engel S.R."/>
            <person name="Dietrich F.S."/>
            <person name="Fisk D.G."/>
            <person name="Binkley G."/>
            <person name="Balakrishnan R."/>
            <person name="Costanzo M.C."/>
            <person name="Dwight S.S."/>
            <person name="Hitz B.C."/>
            <person name="Karra K."/>
            <person name="Nash R.S."/>
            <person name="Weng S."/>
            <person name="Wong E.D."/>
            <person name="Lloyd P."/>
            <person name="Skrzypek M.S."/>
            <person name="Miyasato S.R."/>
            <person name="Simison M."/>
            <person name="Cherry J.M."/>
        </authorList>
    </citation>
    <scope>GENOME REANNOTATION</scope>
    <source>
        <strain>ATCC 204508 / S288c</strain>
    </source>
</reference>
<reference key="3">
    <citation type="journal article" date="2003" name="Nature">
        <title>Global analysis of protein expression in yeast.</title>
        <authorList>
            <person name="Ghaemmaghami S."/>
            <person name="Huh W.-K."/>
            <person name="Bower K."/>
            <person name="Howson R.W."/>
            <person name="Belle A."/>
            <person name="Dephoure N."/>
            <person name="O'Shea E.K."/>
            <person name="Weissman J.S."/>
        </authorList>
    </citation>
    <scope>LEVEL OF PROTEIN EXPRESSION [LARGE SCALE ANALYSIS]</scope>
</reference>
<feature type="chain" id="PRO_0000202973" description="Uncharacterized protein YIL092W">
    <location>
        <begin position="1"/>
        <end position="633"/>
    </location>
</feature>
<feature type="transmembrane region" description="Helical" evidence="1">
    <location>
        <begin position="99"/>
        <end position="118"/>
    </location>
</feature>
<feature type="transmembrane region" description="Helical" evidence="1">
    <location>
        <begin position="217"/>
        <end position="233"/>
    </location>
</feature>
<feature type="region of interest" description="Disordered" evidence="2">
    <location>
        <begin position="12"/>
        <end position="43"/>
    </location>
</feature>
<feature type="region of interest" description="Disordered" evidence="2">
    <location>
        <begin position="593"/>
        <end position="612"/>
    </location>
</feature>
<feature type="compositionally biased region" description="Polar residues" evidence="2">
    <location>
        <begin position="13"/>
        <end position="29"/>
    </location>
</feature>
<feature type="compositionally biased region" description="Basic residues" evidence="2">
    <location>
        <begin position="31"/>
        <end position="42"/>
    </location>
</feature>